<reference key="1">
    <citation type="journal article" date="2006" name="J. Genet.">
        <title>Molecular cloning and characterization of a novel human testis-specific gene by use of digital differential display.</title>
        <authorList>
            <person name="Nie D."/>
            <person name="Xiang Y."/>
        </authorList>
    </citation>
    <scope>NUCLEOTIDE SEQUENCE [MRNA] (ISOFORM 1)</scope>
    <scope>TISSUE SPECIFICITY</scope>
</reference>
<reference key="2">
    <citation type="journal article" date="2004" name="Genome Res.">
        <title>The status, quality, and expansion of the NIH full-length cDNA project: the Mammalian Gene Collection (MGC).</title>
        <authorList>
            <consortium name="The MGC Project Team"/>
        </authorList>
    </citation>
    <scope>NUCLEOTIDE SEQUENCE [LARGE SCALE MRNA] (ISOFORMS 1 AND 2)</scope>
    <source>
        <tissue>Brain</tissue>
        <tissue>Testis</tissue>
    </source>
</reference>
<keyword id="KW-0025">Alternative splicing</keyword>
<keyword id="KW-1185">Reference proteome</keyword>
<proteinExistence type="evidence at protein level"/>
<evidence type="ECO:0000269" key="1">
    <source>
    </source>
</evidence>
<evidence type="ECO:0000303" key="2">
    <source>
    </source>
</evidence>
<gene>
    <name type="primary">SPATA8</name>
</gene>
<accession>Q6RVD6</accession>
<accession>Q2KJ07</accession>
<sequence length="105" mass="11727">MAPAGMSGAQDNSCLYQEIAPSFQRLPCPRTSSRHFSEAMTCPCGWRPFKGGPGGLKGPVWPAKEENSCSHGRIQRVQRRRVPSASPLIQKINRRSVLFHPYCWS</sequence>
<feature type="chain" id="PRO_0000278444" description="Spermatogenesis-associated protein 8">
    <location>
        <begin position="1"/>
        <end position="105"/>
    </location>
</feature>
<feature type="splice variant" id="VSP_023281" description="In isoform 2." evidence="2">
    <original>TSSRHFSEAMTCPCGWRPFKGGPGGLKGPVWPAKEENSCSHGRIQRVQRRRVPSASPLIQKINRRSVLFHPYCWS</original>
    <variation>YLMSCPWQFSTPDVGLTPIRLPFLCGKTGMKLQHS</variation>
    <location>
        <begin position="31"/>
        <end position="105"/>
    </location>
</feature>
<comment type="interaction">
    <interactant intactId="EBI-8635958">
        <id>Q6RVD6</id>
    </interactant>
    <interactant intactId="EBI-10173507">
        <id>Q6UY14-3</id>
        <label>ADAMTSL4</label>
    </interactant>
    <organismsDiffer>false</organismsDiffer>
    <experiments>3</experiments>
</comment>
<comment type="interaction">
    <interactant intactId="EBI-8635958">
        <id>Q6RVD6</id>
    </interactant>
    <interactant intactId="EBI-2548702">
        <id>Q96DZ9</id>
        <label>CMTM5</label>
    </interactant>
    <organismsDiffer>false</organismsDiffer>
    <experiments>3</experiments>
</comment>
<comment type="interaction">
    <interactant intactId="EBI-8635958">
        <id>Q6RVD6</id>
    </interactant>
    <interactant intactId="EBI-747133">
        <id>P27658</id>
        <label>COL8A1</label>
    </interactant>
    <organismsDiffer>false</organismsDiffer>
    <experiments>3</experiments>
</comment>
<comment type="interaction">
    <interactant intactId="EBI-8635958">
        <id>Q6RVD6</id>
    </interactant>
    <interactant intactId="EBI-3867333">
        <id>A8MQ03</id>
        <label>CYSRT1</label>
    </interactant>
    <organismsDiffer>false</organismsDiffer>
    <experiments>3</experiments>
</comment>
<comment type="interaction">
    <interactant intactId="EBI-8635958">
        <id>Q6RVD6</id>
    </interactant>
    <interactant intactId="EBI-743414">
        <id>O95967</id>
        <label>EFEMP2</label>
    </interactant>
    <organismsDiffer>false</organismsDiffer>
    <experiments>3</experiments>
</comment>
<comment type="interaction">
    <interactant intactId="EBI-8635958">
        <id>Q6RVD6</id>
    </interactant>
    <interactant intactId="EBI-349832">
        <id>Q9HD26</id>
        <label>GOPC</label>
    </interactant>
    <organismsDiffer>false</organismsDiffer>
    <experiments>3</experiments>
</comment>
<comment type="interaction">
    <interactant intactId="EBI-8635958">
        <id>Q6RVD6</id>
    </interactant>
    <interactant intactId="EBI-747754">
        <id>P28799</id>
        <label>GRN</label>
    </interactant>
    <organismsDiffer>false</organismsDiffer>
    <experiments>3</experiments>
</comment>
<comment type="interaction">
    <interactant intactId="EBI-8635958">
        <id>Q6RVD6</id>
    </interactant>
    <interactant intactId="EBI-352986">
        <id>P52597</id>
        <label>HNRNPF</label>
    </interactant>
    <organismsDiffer>false</organismsDiffer>
    <experiments>3</experiments>
</comment>
<comment type="interaction">
    <interactant intactId="EBI-8635958">
        <id>Q6RVD6</id>
    </interactant>
    <interactant intactId="EBI-352682">
        <id>P04792</id>
        <label>HSPB1</label>
    </interactant>
    <organismsDiffer>false</organismsDiffer>
    <experiments>3</experiments>
</comment>
<comment type="interaction">
    <interactant intactId="EBI-8635958">
        <id>Q6RVD6</id>
    </interactant>
    <interactant intactId="EBI-10172290">
        <id>P60409</id>
        <label>KRTAP10-7</label>
    </interactant>
    <organismsDiffer>false</organismsDiffer>
    <experiments>3</experiments>
</comment>
<comment type="interaction">
    <interactant intactId="EBI-8635958">
        <id>Q6RVD6</id>
    </interactant>
    <interactant intactId="EBI-10172052">
        <id>P60411</id>
        <label>KRTAP10-9</label>
    </interactant>
    <organismsDiffer>false</organismsDiffer>
    <experiments>3</experiments>
</comment>
<comment type="interaction">
    <interactant intactId="EBI-8635958">
        <id>Q6RVD6</id>
    </interactant>
    <interactant intactId="EBI-11962084">
        <id>Q3LI66</id>
        <label>KRTAP6-2</label>
    </interactant>
    <organismsDiffer>false</organismsDiffer>
    <experiments>3</experiments>
</comment>
<comment type="interaction">
    <interactant intactId="EBI-8635958">
        <id>Q6RVD6</id>
    </interactant>
    <interactant intactId="EBI-1044640">
        <id>Q9BYQ4</id>
        <label>KRTAP9-2</label>
    </interactant>
    <organismsDiffer>false</organismsDiffer>
    <experiments>3</experiments>
</comment>
<comment type="interaction">
    <interactant intactId="EBI-8635958">
        <id>Q6RVD6</id>
    </interactant>
    <interactant intactId="EBI-724076">
        <id>Q99750</id>
        <label>MDFI</label>
    </interactant>
    <organismsDiffer>false</organismsDiffer>
    <experiments>6</experiments>
</comment>
<comment type="interaction">
    <interactant intactId="EBI-8635958">
        <id>Q6RVD6</id>
    </interactant>
    <interactant intactId="EBI-2340269">
        <id>Q13064</id>
        <label>MKRN3</label>
    </interactant>
    <organismsDiffer>false</organismsDiffer>
    <experiments>3</experiments>
</comment>
<comment type="interaction">
    <interactant intactId="EBI-8635958">
        <id>Q6RVD6</id>
    </interactant>
    <interactant intactId="EBI-744248">
        <id>P40692</id>
        <label>MLH1</label>
    </interactant>
    <organismsDiffer>false</organismsDiffer>
    <experiments>3</experiments>
</comment>
<comment type="interaction">
    <interactant intactId="EBI-8635958">
        <id>Q6RVD6</id>
    </interactant>
    <interactant intactId="EBI-742948">
        <id>Q5JR59</id>
        <label>MTUS2</label>
    </interactant>
    <organismsDiffer>false</organismsDiffer>
    <experiments>3</experiments>
</comment>
<comment type="interaction">
    <interactant intactId="EBI-8635958">
        <id>Q6RVD6</id>
    </interactant>
    <interactant intactId="EBI-11522433">
        <id>Q5JR59-3</id>
        <label>MTUS2</label>
    </interactant>
    <organismsDiffer>false</organismsDiffer>
    <experiments>3</experiments>
</comment>
<comment type="interaction">
    <interactant intactId="EBI-8635958">
        <id>Q6RVD6</id>
    </interactant>
    <interactant intactId="EBI-945833">
        <id>Q7Z3S9</id>
        <label>NOTCH2NLA</label>
    </interactant>
    <organismsDiffer>false</organismsDiffer>
    <experiments>3</experiments>
</comment>
<comment type="interaction">
    <interactant intactId="EBI-8635958">
        <id>Q6RVD6</id>
    </interactant>
    <interactant intactId="EBI-22310682">
        <id>P0DPK4</id>
        <label>NOTCH2NLC</label>
    </interactant>
    <organismsDiffer>false</organismsDiffer>
    <experiments>3</experiments>
</comment>
<comment type="interaction">
    <interactant intactId="EBI-8635958">
        <id>Q6RVD6</id>
    </interactant>
    <interactant intactId="EBI-988601">
        <id>O43933</id>
        <label>PEX1</label>
    </interactant>
    <organismsDiffer>false</organismsDiffer>
    <experiments>3</experiments>
</comment>
<comment type="interaction">
    <interactant intactId="EBI-8635958">
        <id>Q6RVD6</id>
    </interactant>
    <interactant intactId="EBI-740019">
        <id>O15162</id>
        <label>PLSCR1</label>
    </interactant>
    <organismsDiffer>false</organismsDiffer>
    <experiments>3</experiments>
</comment>
<comment type="interaction">
    <interactant intactId="EBI-8635958">
        <id>Q6RVD6</id>
    </interactant>
    <interactant intactId="EBI-348380">
        <id>P25788</id>
        <label>PSMA3</label>
    </interactant>
    <organismsDiffer>false</organismsDiffer>
    <experiments>3</experiments>
</comment>
<comment type="interaction">
    <interactant intactId="EBI-8635958">
        <id>Q6RVD6</id>
    </interactant>
    <interactant intactId="EBI-740322">
        <id>Q93062</id>
        <label>RBPMS</label>
    </interactant>
    <organismsDiffer>false</organismsDiffer>
    <experiments>4</experiments>
</comment>
<comment type="interaction">
    <interactant intactId="EBI-8635958">
        <id>Q6RVD6</id>
    </interactant>
    <interactant intactId="EBI-396669">
        <id>Q9Y3C5</id>
        <label>RNF11</label>
    </interactant>
    <organismsDiffer>false</organismsDiffer>
    <experiments>3</experiments>
</comment>
<comment type="interaction">
    <interactant intactId="EBI-8635958">
        <id>Q6RVD6</id>
    </interactant>
    <interactant intactId="EBI-750487">
        <id>Q8WW24</id>
        <label>TEKT4</label>
    </interactant>
    <organismsDiffer>false</organismsDiffer>
    <experiments>3</experiments>
</comment>
<comment type="interaction">
    <interactant intactId="EBI-8635958">
        <id>Q6RVD6</id>
    </interactant>
    <interactant intactId="EBI-720609">
        <id>O76024</id>
        <label>WFS1</label>
    </interactant>
    <organismsDiffer>false</organismsDiffer>
    <experiments>3</experiments>
</comment>
<comment type="interaction">
    <interactant intactId="EBI-8635958">
        <id>Q6RVD6</id>
    </interactant>
    <interactant intactId="EBI-7254550">
        <id>P36508</id>
        <label>ZNF76</label>
    </interactant>
    <organismsDiffer>false</organismsDiffer>
    <experiments>3</experiments>
</comment>
<comment type="alternative products">
    <event type="alternative splicing"/>
    <isoform>
        <id>Q6RVD6-1</id>
        <name>1</name>
        <sequence type="displayed"/>
    </isoform>
    <isoform>
        <id>Q6RVD6-2</id>
        <name>2</name>
        <sequence type="described" ref="VSP_023281"/>
    </isoform>
</comment>
<comment type="tissue specificity">
    <text evidence="1">Expressed at high levels in adult testis, at moderate levels in sperm and at low levels in fetal testis. Not detected in other tissues.</text>
</comment>
<protein>
    <recommendedName>
        <fullName>Spermatogenesis-associated protein 8</fullName>
    </recommendedName>
    <alternativeName>
        <fullName>Spermatogenesis-related protein 8</fullName>
    </alternativeName>
</protein>
<dbReference type="EMBL" id="AY489187">
    <property type="protein sequence ID" value="AAR39432.1"/>
    <property type="molecule type" value="mRNA"/>
</dbReference>
<dbReference type="EMBL" id="BC033979">
    <property type="protein sequence ID" value="AAH33979.1"/>
    <property type="molecule type" value="mRNA"/>
</dbReference>
<dbReference type="EMBL" id="BC066292">
    <property type="protein sequence ID" value="AAH66292.1"/>
    <property type="molecule type" value="mRNA"/>
</dbReference>
<dbReference type="EMBL" id="BC112390">
    <property type="protein sequence ID" value="AAI12391.1"/>
    <property type="molecule type" value="mRNA"/>
</dbReference>
<dbReference type="RefSeq" id="NP_001291733.1">
    <property type="nucleotide sequence ID" value="NM_001304804.1"/>
</dbReference>
<dbReference type="RefSeq" id="NP_001291734.1">
    <property type="nucleotide sequence ID" value="NM_001304805.1"/>
</dbReference>
<dbReference type="RefSeq" id="NP_001291735.1">
    <property type="nucleotide sequence ID" value="NM_001304806.1"/>
</dbReference>
<dbReference type="RefSeq" id="NP_775770.1">
    <property type="nucleotide sequence ID" value="NM_173499.4"/>
</dbReference>
<dbReference type="BioGRID" id="126956">
    <property type="interactions" value="31"/>
</dbReference>
<dbReference type="FunCoup" id="Q6RVD6">
    <property type="interactions" value="9"/>
</dbReference>
<dbReference type="IntAct" id="Q6RVD6">
    <property type="interactions" value="32"/>
</dbReference>
<dbReference type="MINT" id="Q6RVD6"/>
<dbReference type="iPTMnet" id="Q6RVD6"/>
<dbReference type="PhosphoSitePlus" id="Q6RVD6"/>
<dbReference type="BioMuta" id="SPATA8"/>
<dbReference type="DMDM" id="74738039"/>
<dbReference type="MassIVE" id="Q6RVD6"/>
<dbReference type="PaxDb" id="9606-ENSP00000328149"/>
<dbReference type="ProteomicsDB" id="67327">
    <molecule id="Q6RVD6-1"/>
</dbReference>
<dbReference type="DNASU" id="145946"/>
<dbReference type="UCSC" id="uc002bue.4">
    <molecule id="Q6RVD6-1"/>
    <property type="organism name" value="human"/>
</dbReference>
<dbReference type="AGR" id="HGNC:28676"/>
<dbReference type="GeneCards" id="SPATA8"/>
<dbReference type="HGNC" id="HGNC:28676">
    <property type="gene designation" value="SPATA8"/>
</dbReference>
<dbReference type="MIM" id="613948">
    <property type="type" value="gene"/>
</dbReference>
<dbReference type="neXtProt" id="NX_Q6RVD6"/>
<dbReference type="PharmGKB" id="PA134977227"/>
<dbReference type="eggNOG" id="ENOG502TE2A">
    <property type="taxonomic scope" value="Eukaryota"/>
</dbReference>
<dbReference type="HOGENOM" id="CLU_177416_0_0_1"/>
<dbReference type="InParanoid" id="Q6RVD6"/>
<dbReference type="PAN-GO" id="Q6RVD6">
    <property type="GO annotations" value="0 GO annotations based on evolutionary models"/>
</dbReference>
<dbReference type="PhylomeDB" id="Q6RVD6"/>
<dbReference type="TreeFam" id="TF341258"/>
<dbReference type="PathwayCommons" id="Q6RVD6"/>
<dbReference type="SignaLink" id="Q6RVD6"/>
<dbReference type="BioGRID-ORCS" id="145946">
    <property type="hits" value="10 hits in 1136 CRISPR screens"/>
</dbReference>
<dbReference type="ChiTaRS" id="SPATA8">
    <property type="organism name" value="human"/>
</dbReference>
<dbReference type="GenomeRNAi" id="145946"/>
<dbReference type="Pharos" id="Q6RVD6">
    <property type="development level" value="Tdark"/>
</dbReference>
<dbReference type="PRO" id="PR:Q6RVD6"/>
<dbReference type="Proteomes" id="UP000005640">
    <property type="component" value="Unplaced"/>
</dbReference>
<dbReference type="RNAct" id="Q6RVD6">
    <property type="molecule type" value="protein"/>
</dbReference>
<name>SPAT8_HUMAN</name>
<organism>
    <name type="scientific">Homo sapiens</name>
    <name type="common">Human</name>
    <dbReference type="NCBI Taxonomy" id="9606"/>
    <lineage>
        <taxon>Eukaryota</taxon>
        <taxon>Metazoa</taxon>
        <taxon>Chordata</taxon>
        <taxon>Craniata</taxon>
        <taxon>Vertebrata</taxon>
        <taxon>Euteleostomi</taxon>
        <taxon>Mammalia</taxon>
        <taxon>Eutheria</taxon>
        <taxon>Euarchontoglires</taxon>
        <taxon>Primates</taxon>
        <taxon>Haplorrhini</taxon>
        <taxon>Catarrhini</taxon>
        <taxon>Hominidae</taxon>
        <taxon>Homo</taxon>
    </lineage>
</organism>